<gene>
    <name evidence="1" type="primary">ldh</name>
    <name type="ordered locus">BG0088</name>
</gene>
<comment type="function">
    <text evidence="1">Catalyzes the conversion of lactate to pyruvate.</text>
</comment>
<comment type="catalytic activity">
    <reaction evidence="1">
        <text>(S)-lactate + NAD(+) = pyruvate + NADH + H(+)</text>
        <dbReference type="Rhea" id="RHEA:23444"/>
        <dbReference type="ChEBI" id="CHEBI:15361"/>
        <dbReference type="ChEBI" id="CHEBI:15378"/>
        <dbReference type="ChEBI" id="CHEBI:16651"/>
        <dbReference type="ChEBI" id="CHEBI:57540"/>
        <dbReference type="ChEBI" id="CHEBI:57945"/>
        <dbReference type="EC" id="1.1.1.27"/>
    </reaction>
</comment>
<comment type="activity regulation">
    <text evidence="1">Allosterically activated by fructose 1,6-bisphosphate (FBP).</text>
</comment>
<comment type="pathway">
    <text evidence="1">Fermentation; pyruvate fermentation to lactate; (S)-lactate from pyruvate: step 1/1.</text>
</comment>
<comment type="subunit">
    <text evidence="1">Homotetramer.</text>
</comment>
<comment type="subcellular location">
    <subcellularLocation>
        <location evidence="1">Cytoplasm</location>
    </subcellularLocation>
</comment>
<comment type="similarity">
    <text evidence="1">Belongs to the LDH/MDH superfamily. LDH family.</text>
</comment>
<accession>Q662S5</accession>
<organism>
    <name type="scientific">Borrelia garinii subsp. bavariensis (strain ATCC BAA-2496 / DSM 23469 / PBi)</name>
    <name type="common">Borreliella bavariensis</name>
    <dbReference type="NCBI Taxonomy" id="290434"/>
    <lineage>
        <taxon>Bacteria</taxon>
        <taxon>Pseudomonadati</taxon>
        <taxon>Spirochaetota</taxon>
        <taxon>Spirochaetia</taxon>
        <taxon>Spirochaetales</taxon>
        <taxon>Borreliaceae</taxon>
        <taxon>Borreliella</taxon>
    </lineage>
</organism>
<sequence>MLKSNKVVLIGAGGVGSSFAYALTIDNSLVHELVIIDVNENKAKGEVMDLNHGQMFLKKNINVLFGTYKDCINADIVVITAGLNQKPSETRLDLVDKNSEIFKDIITNVVSSGFDGIFVIASNPVDIMTYVTMKYSKFPIHKVIGTGTILDTSRLRYFLSDRLNVNTQNIHSYIMGEHGDSSFATWDETKIAMKPLSEYLAEGKITEIELDEIHKKVVNAAYEVIKLKGATYYAIGLGIKNIVNAIIGDQNIILPISSYINGQYGGLVKDIYIGAPAIVCKEGVKEVLNFKISPKELEKFNSSANQLKSYIDKIEF</sequence>
<keyword id="KW-0021">Allosteric enzyme</keyword>
<keyword id="KW-0963">Cytoplasm</keyword>
<keyword id="KW-0520">NAD</keyword>
<keyword id="KW-0560">Oxidoreductase</keyword>
<keyword id="KW-0597">Phosphoprotein</keyword>
<protein>
    <recommendedName>
        <fullName evidence="1">L-lactate dehydrogenase</fullName>
        <shortName evidence="1">L-LDH</shortName>
        <ecNumber evidence="1">1.1.1.27</ecNumber>
    </recommendedName>
</protein>
<dbReference type="EC" id="1.1.1.27" evidence="1"/>
<dbReference type="EMBL" id="CP000013">
    <property type="protein sequence ID" value="AAU06946.1"/>
    <property type="molecule type" value="Genomic_DNA"/>
</dbReference>
<dbReference type="RefSeq" id="WP_011193441.1">
    <property type="nucleotide sequence ID" value="NZ_CP028872.1"/>
</dbReference>
<dbReference type="SMR" id="Q662S5"/>
<dbReference type="GeneID" id="45160883"/>
<dbReference type="KEGG" id="bga:BG0088"/>
<dbReference type="eggNOG" id="COG0039">
    <property type="taxonomic scope" value="Bacteria"/>
</dbReference>
<dbReference type="HOGENOM" id="CLU_045401_1_1_12"/>
<dbReference type="OrthoDB" id="9802969at2"/>
<dbReference type="UniPathway" id="UPA00554">
    <property type="reaction ID" value="UER00611"/>
</dbReference>
<dbReference type="Proteomes" id="UP000002276">
    <property type="component" value="Chromosome"/>
</dbReference>
<dbReference type="GO" id="GO:0005737">
    <property type="term" value="C:cytoplasm"/>
    <property type="evidence" value="ECO:0007669"/>
    <property type="project" value="UniProtKB-SubCell"/>
</dbReference>
<dbReference type="GO" id="GO:0004459">
    <property type="term" value="F:L-lactate dehydrogenase activity"/>
    <property type="evidence" value="ECO:0007669"/>
    <property type="project" value="UniProtKB-UniRule"/>
</dbReference>
<dbReference type="GO" id="GO:0006096">
    <property type="term" value="P:glycolytic process"/>
    <property type="evidence" value="ECO:0007669"/>
    <property type="project" value="UniProtKB-UniRule"/>
</dbReference>
<dbReference type="GO" id="GO:0006089">
    <property type="term" value="P:lactate metabolic process"/>
    <property type="evidence" value="ECO:0007669"/>
    <property type="project" value="TreeGrafter"/>
</dbReference>
<dbReference type="CDD" id="cd05291">
    <property type="entry name" value="HicDH_like"/>
    <property type="match status" value="1"/>
</dbReference>
<dbReference type="FunFam" id="3.40.50.720:FF:000018">
    <property type="entry name" value="Malate dehydrogenase"/>
    <property type="match status" value="1"/>
</dbReference>
<dbReference type="Gene3D" id="3.90.110.10">
    <property type="entry name" value="Lactate dehydrogenase/glycoside hydrolase, family 4, C-terminal"/>
    <property type="match status" value="1"/>
</dbReference>
<dbReference type="Gene3D" id="3.40.50.720">
    <property type="entry name" value="NAD(P)-binding Rossmann-like Domain"/>
    <property type="match status" value="1"/>
</dbReference>
<dbReference type="HAMAP" id="MF_00488">
    <property type="entry name" value="Lactate_dehydrog"/>
    <property type="match status" value="1"/>
</dbReference>
<dbReference type="InterPro" id="IPR001557">
    <property type="entry name" value="L-lactate/malate_DH"/>
</dbReference>
<dbReference type="InterPro" id="IPR011304">
    <property type="entry name" value="L-lactate_DH"/>
</dbReference>
<dbReference type="InterPro" id="IPR018177">
    <property type="entry name" value="L-lactate_DH_AS"/>
</dbReference>
<dbReference type="InterPro" id="IPR022383">
    <property type="entry name" value="Lactate/malate_DH_C"/>
</dbReference>
<dbReference type="InterPro" id="IPR001236">
    <property type="entry name" value="Lactate/malate_DH_N"/>
</dbReference>
<dbReference type="InterPro" id="IPR015955">
    <property type="entry name" value="Lactate_DH/Glyco_Ohase_4_C"/>
</dbReference>
<dbReference type="InterPro" id="IPR036291">
    <property type="entry name" value="NAD(P)-bd_dom_sf"/>
</dbReference>
<dbReference type="NCBIfam" id="TIGR01771">
    <property type="entry name" value="L-LDH-NAD"/>
    <property type="match status" value="1"/>
</dbReference>
<dbReference type="NCBIfam" id="NF000824">
    <property type="entry name" value="PRK00066.1"/>
    <property type="match status" value="1"/>
</dbReference>
<dbReference type="PANTHER" id="PTHR43128">
    <property type="entry name" value="L-2-HYDROXYCARBOXYLATE DEHYDROGENASE (NAD(P)(+))"/>
    <property type="match status" value="1"/>
</dbReference>
<dbReference type="PANTHER" id="PTHR43128:SF16">
    <property type="entry name" value="L-LACTATE DEHYDROGENASE"/>
    <property type="match status" value="1"/>
</dbReference>
<dbReference type="Pfam" id="PF02866">
    <property type="entry name" value="Ldh_1_C"/>
    <property type="match status" value="1"/>
</dbReference>
<dbReference type="Pfam" id="PF00056">
    <property type="entry name" value="Ldh_1_N"/>
    <property type="match status" value="1"/>
</dbReference>
<dbReference type="PIRSF" id="PIRSF000102">
    <property type="entry name" value="Lac_mal_DH"/>
    <property type="match status" value="1"/>
</dbReference>
<dbReference type="PRINTS" id="PR00086">
    <property type="entry name" value="LLDHDRGNASE"/>
</dbReference>
<dbReference type="SUPFAM" id="SSF56327">
    <property type="entry name" value="LDH C-terminal domain-like"/>
    <property type="match status" value="1"/>
</dbReference>
<dbReference type="SUPFAM" id="SSF51735">
    <property type="entry name" value="NAD(P)-binding Rossmann-fold domains"/>
    <property type="match status" value="1"/>
</dbReference>
<dbReference type="PROSITE" id="PS00064">
    <property type="entry name" value="L_LDH"/>
    <property type="match status" value="1"/>
</dbReference>
<feature type="chain" id="PRO_0000237544" description="L-lactate dehydrogenase">
    <location>
        <begin position="1"/>
        <end position="316"/>
    </location>
</feature>
<feature type="active site" description="Proton acceptor" evidence="1">
    <location>
        <position position="178"/>
    </location>
</feature>
<feature type="binding site" evidence="1">
    <location>
        <position position="15"/>
    </location>
    <ligand>
        <name>NAD(+)</name>
        <dbReference type="ChEBI" id="CHEBI:57540"/>
    </ligand>
</feature>
<feature type="binding site" evidence="1">
    <location>
        <position position="37"/>
    </location>
    <ligand>
        <name>NAD(+)</name>
        <dbReference type="ChEBI" id="CHEBI:57540"/>
    </ligand>
</feature>
<feature type="binding site" evidence="1">
    <location>
        <position position="42"/>
    </location>
    <ligand>
        <name>NAD(+)</name>
        <dbReference type="ChEBI" id="CHEBI:57540"/>
    </ligand>
</feature>
<feature type="binding site" evidence="1">
    <location>
        <position position="68"/>
    </location>
    <ligand>
        <name>NAD(+)</name>
        <dbReference type="ChEBI" id="CHEBI:57540"/>
    </ligand>
</feature>
<feature type="binding site" evidence="1">
    <location>
        <begin position="82"/>
        <end position="83"/>
    </location>
    <ligand>
        <name>NAD(+)</name>
        <dbReference type="ChEBI" id="CHEBI:57540"/>
    </ligand>
</feature>
<feature type="binding site" evidence="1">
    <location>
        <position position="85"/>
    </location>
    <ligand>
        <name>substrate</name>
    </ligand>
</feature>
<feature type="binding site" evidence="1">
    <location>
        <position position="91"/>
    </location>
    <ligand>
        <name>substrate</name>
    </ligand>
</feature>
<feature type="binding site" evidence="1">
    <location>
        <begin position="121"/>
        <end position="123"/>
    </location>
    <ligand>
        <name>NAD(+)</name>
        <dbReference type="ChEBI" id="CHEBI:57540"/>
    </ligand>
</feature>
<feature type="binding site" evidence="1">
    <location>
        <begin position="123"/>
        <end position="126"/>
    </location>
    <ligand>
        <name>substrate</name>
    </ligand>
</feature>
<feature type="binding site" evidence="1">
    <location>
        <position position="146"/>
    </location>
    <ligand>
        <name>NAD(+)</name>
        <dbReference type="ChEBI" id="CHEBI:57540"/>
    </ligand>
</feature>
<feature type="binding site" evidence="1">
    <location>
        <begin position="151"/>
        <end position="154"/>
    </location>
    <ligand>
        <name>substrate</name>
    </ligand>
</feature>
<feature type="binding site" evidence="1">
    <location>
        <position position="156"/>
    </location>
    <ligand>
        <name>beta-D-fructose 1,6-bisphosphate</name>
        <dbReference type="ChEBI" id="CHEBI:32966"/>
        <note>allosteric activator</note>
    </ligand>
</feature>
<feature type="binding site" evidence="1">
    <location>
        <position position="171"/>
    </location>
    <ligand>
        <name>beta-D-fructose 1,6-bisphosphate</name>
        <dbReference type="ChEBI" id="CHEBI:32966"/>
        <note>allosteric activator</note>
    </ligand>
</feature>
<feature type="binding site" evidence="1">
    <location>
        <position position="231"/>
    </location>
    <ligand>
        <name>substrate</name>
    </ligand>
</feature>
<feature type="modified residue" description="Phosphotyrosine" evidence="1">
    <location>
        <position position="222"/>
    </location>
</feature>
<name>LDH_BORGP</name>
<proteinExistence type="inferred from homology"/>
<reference key="1">
    <citation type="journal article" date="2004" name="Nucleic Acids Res.">
        <title>Comparative analysis of the Borrelia garinii genome.</title>
        <authorList>
            <person name="Gloeckner G."/>
            <person name="Lehmann R."/>
            <person name="Romualdi A."/>
            <person name="Pradella S."/>
            <person name="Schulte-Spechtel U."/>
            <person name="Schilhabel M."/>
            <person name="Wilske B."/>
            <person name="Suehnel J."/>
            <person name="Platzer M."/>
        </authorList>
    </citation>
    <scope>NUCLEOTIDE SEQUENCE [LARGE SCALE GENOMIC DNA]</scope>
    <source>
        <strain>ATCC BAA-2496 / DSM 23469 / PBi</strain>
    </source>
</reference>
<evidence type="ECO:0000255" key="1">
    <source>
        <dbReference type="HAMAP-Rule" id="MF_00488"/>
    </source>
</evidence>